<sequence>MAKNSNKVKKNTNKANNFKLLADNRYAKFQYAISETIEAGIELLGTEVKSIRNGKANLRDGYCSFRDGEILLLNVHISPHKNVGSFFNHDPLRNRKLLLHKKEIIKMKSNTEKKGMTIVPLSLYLKGSWIKLTIGVGKGKKLHDKRQDEKQKSIKKEINSALKR</sequence>
<feature type="chain" id="PRO_0000331075" description="SsrA-binding protein">
    <location>
        <begin position="1"/>
        <end position="164"/>
    </location>
</feature>
<feature type="region of interest" description="Disordered" evidence="2">
    <location>
        <begin position="141"/>
        <end position="164"/>
    </location>
</feature>
<feature type="compositionally biased region" description="Basic and acidic residues" evidence="2">
    <location>
        <begin position="145"/>
        <end position="158"/>
    </location>
</feature>
<proteinExistence type="inferred from homology"/>
<evidence type="ECO:0000255" key="1">
    <source>
        <dbReference type="HAMAP-Rule" id="MF_00023"/>
    </source>
</evidence>
<evidence type="ECO:0000256" key="2">
    <source>
        <dbReference type="SAM" id="MobiDB-lite"/>
    </source>
</evidence>
<organism>
    <name type="scientific">Prochlorococcus marinus (strain AS9601)</name>
    <dbReference type="NCBI Taxonomy" id="146891"/>
    <lineage>
        <taxon>Bacteria</taxon>
        <taxon>Bacillati</taxon>
        <taxon>Cyanobacteriota</taxon>
        <taxon>Cyanophyceae</taxon>
        <taxon>Synechococcales</taxon>
        <taxon>Prochlorococcaceae</taxon>
        <taxon>Prochlorococcus</taxon>
    </lineage>
</organism>
<accession>A2BTJ8</accession>
<dbReference type="EMBL" id="CP000551">
    <property type="protein sequence ID" value="ABM71109.1"/>
    <property type="molecule type" value="Genomic_DNA"/>
</dbReference>
<dbReference type="RefSeq" id="WP_011819228.1">
    <property type="nucleotide sequence ID" value="NC_008816.1"/>
</dbReference>
<dbReference type="SMR" id="A2BTJ8"/>
<dbReference type="STRING" id="146891.A9601_18261"/>
<dbReference type="KEGG" id="pmb:A9601_18261"/>
<dbReference type="eggNOG" id="COG0691">
    <property type="taxonomic scope" value="Bacteria"/>
</dbReference>
<dbReference type="HOGENOM" id="CLU_108953_0_1_3"/>
<dbReference type="OrthoDB" id="9805462at2"/>
<dbReference type="Proteomes" id="UP000002590">
    <property type="component" value="Chromosome"/>
</dbReference>
<dbReference type="GO" id="GO:0005829">
    <property type="term" value="C:cytosol"/>
    <property type="evidence" value="ECO:0007669"/>
    <property type="project" value="TreeGrafter"/>
</dbReference>
<dbReference type="GO" id="GO:0003723">
    <property type="term" value="F:RNA binding"/>
    <property type="evidence" value="ECO:0007669"/>
    <property type="project" value="UniProtKB-UniRule"/>
</dbReference>
<dbReference type="GO" id="GO:0070929">
    <property type="term" value="P:trans-translation"/>
    <property type="evidence" value="ECO:0007669"/>
    <property type="project" value="UniProtKB-UniRule"/>
</dbReference>
<dbReference type="CDD" id="cd09294">
    <property type="entry name" value="SmpB"/>
    <property type="match status" value="1"/>
</dbReference>
<dbReference type="Gene3D" id="2.40.280.10">
    <property type="match status" value="1"/>
</dbReference>
<dbReference type="HAMAP" id="MF_00023">
    <property type="entry name" value="SmpB"/>
    <property type="match status" value="1"/>
</dbReference>
<dbReference type="InterPro" id="IPR023620">
    <property type="entry name" value="SmpB"/>
</dbReference>
<dbReference type="InterPro" id="IPR000037">
    <property type="entry name" value="SsrA-bd_prot"/>
</dbReference>
<dbReference type="InterPro" id="IPR020081">
    <property type="entry name" value="SsrA-bd_prot_CS"/>
</dbReference>
<dbReference type="NCBIfam" id="NF003843">
    <property type="entry name" value="PRK05422.1"/>
    <property type="match status" value="1"/>
</dbReference>
<dbReference type="NCBIfam" id="TIGR00086">
    <property type="entry name" value="smpB"/>
    <property type="match status" value="1"/>
</dbReference>
<dbReference type="PANTHER" id="PTHR30308:SF2">
    <property type="entry name" value="SSRA-BINDING PROTEIN"/>
    <property type="match status" value="1"/>
</dbReference>
<dbReference type="PANTHER" id="PTHR30308">
    <property type="entry name" value="TMRNA-BINDING COMPONENT OF TRANS-TRANSLATION TAGGING COMPLEX"/>
    <property type="match status" value="1"/>
</dbReference>
<dbReference type="Pfam" id="PF01668">
    <property type="entry name" value="SmpB"/>
    <property type="match status" value="1"/>
</dbReference>
<dbReference type="SUPFAM" id="SSF74982">
    <property type="entry name" value="Small protein B (SmpB)"/>
    <property type="match status" value="1"/>
</dbReference>
<dbReference type="PROSITE" id="PS01317">
    <property type="entry name" value="SSRP"/>
    <property type="match status" value="1"/>
</dbReference>
<name>SSRP_PROMS</name>
<comment type="function">
    <text evidence="1">Required for rescue of stalled ribosomes mediated by trans-translation. Binds to transfer-messenger RNA (tmRNA), required for stable association of tmRNA with ribosomes. tmRNA and SmpB together mimic tRNA shape, replacing the anticodon stem-loop with SmpB. tmRNA is encoded by the ssrA gene; the 2 termini fold to resemble tRNA(Ala) and it encodes a 'tag peptide', a short internal open reading frame. During trans-translation Ala-aminoacylated tmRNA acts like a tRNA, entering the A-site of stalled ribosomes, displacing the stalled mRNA. The ribosome then switches to translate the ORF on the tmRNA; the nascent peptide is terminated with the 'tag peptide' encoded by the tmRNA and targeted for degradation. The ribosome is freed to recommence translation, which seems to be the essential function of trans-translation.</text>
</comment>
<comment type="subcellular location">
    <subcellularLocation>
        <location evidence="1">Cytoplasm</location>
    </subcellularLocation>
    <text evidence="1">The tmRNA-SmpB complex associates with stalled 70S ribosomes.</text>
</comment>
<comment type="similarity">
    <text evidence="1">Belongs to the SmpB family.</text>
</comment>
<gene>
    <name evidence="1" type="primary">smpB</name>
    <name type="ordered locus">A9601_18261</name>
</gene>
<keyword id="KW-0963">Cytoplasm</keyword>
<keyword id="KW-0694">RNA-binding</keyword>
<reference key="1">
    <citation type="journal article" date="2007" name="PLoS Genet.">
        <title>Patterns and implications of gene gain and loss in the evolution of Prochlorococcus.</title>
        <authorList>
            <person name="Kettler G.C."/>
            <person name="Martiny A.C."/>
            <person name="Huang K."/>
            <person name="Zucker J."/>
            <person name="Coleman M.L."/>
            <person name="Rodrigue S."/>
            <person name="Chen F."/>
            <person name="Lapidus A."/>
            <person name="Ferriera S."/>
            <person name="Johnson J."/>
            <person name="Steglich C."/>
            <person name="Church G.M."/>
            <person name="Richardson P."/>
            <person name="Chisholm S.W."/>
        </authorList>
    </citation>
    <scope>NUCLEOTIDE SEQUENCE [LARGE SCALE GENOMIC DNA]</scope>
    <source>
        <strain>AS9601</strain>
    </source>
</reference>
<protein>
    <recommendedName>
        <fullName evidence="1">SsrA-binding protein</fullName>
    </recommendedName>
    <alternativeName>
        <fullName evidence="1">Small protein B</fullName>
    </alternativeName>
</protein>